<name>FLII_BUCAP</name>
<sequence length="466" mass="51775">MEGTMSSCFRGMLMKLRFSELLNNISSFEKKVNNLSDIFSYGCLISVNGLLLEVIGLTAPIGSRCYVERIIDGKILNISAEVVGFKKEKTLLFSLEETYGVFPGTRVFLKCFKNTYSITGKIPLSTELLGRVLDSKGRPLDGRSQLNPKFFTFLKSNVVNPLNRKPITEVLDTGIRAINALITVGRGQRIGIFSSSGLGKSILLGMMAKYTKADVVIIGLIGERGREVKDFIENILGSNGLSRSVVIAAPADVSPLLQIEAASYATSIAEYFRKKNKHVLLIMDSLTRYAMAQRAVSLSLGELPVSKGYPSSVFSKIPILVERTGNTDNYGSITSFYTVLTESEEDPQDPIAHICRSILDGHIVLSRHYAELGHYPAIDIENSISRVMPNIISKKQYSQACYFKKLIASYQRNRDLINIGAYLKGTDSTLDHAIKIWPILERFLQQKQSEKSSYLSSCEELNQIFI</sequence>
<comment type="function">
    <text evidence="1">Probable catalytic subunit of a protein translocase for flagellum-specific export, or a proton translocase involved in local circuits at the flagellum. May be involved in a specialized protein export pathway that proceeds without signal peptide cleavage (By similarity).</text>
</comment>
<comment type="catalytic activity">
    <reaction evidence="2">
        <text>ATP + H2O + 4 H(+)(in) = ADP + phosphate + 5 H(+)(out)</text>
        <dbReference type="Rhea" id="RHEA:57720"/>
        <dbReference type="ChEBI" id="CHEBI:15377"/>
        <dbReference type="ChEBI" id="CHEBI:15378"/>
        <dbReference type="ChEBI" id="CHEBI:30616"/>
        <dbReference type="ChEBI" id="CHEBI:43474"/>
        <dbReference type="ChEBI" id="CHEBI:456216"/>
        <dbReference type="EC" id="7.1.2.2"/>
    </reaction>
</comment>
<comment type="subcellular location">
    <subcellularLocation>
        <location evidence="3">Cytoplasm</location>
    </subcellularLocation>
</comment>
<comment type="similarity">
    <text evidence="3">Belongs to the ATPase alpha/beta chains family.</text>
</comment>
<keyword id="KW-0066">ATP synthesis</keyword>
<keyword id="KW-0067">ATP-binding</keyword>
<keyword id="KW-1005">Bacterial flagellum biogenesis</keyword>
<keyword id="KW-1006">Bacterial flagellum protein export</keyword>
<keyword id="KW-0963">Cytoplasm</keyword>
<keyword id="KW-0375">Hydrogen ion transport</keyword>
<keyword id="KW-0406">Ion transport</keyword>
<keyword id="KW-0547">Nucleotide-binding</keyword>
<keyword id="KW-0653">Protein transport</keyword>
<keyword id="KW-1278">Translocase</keyword>
<keyword id="KW-0813">Transport</keyword>
<accession>Q8KA42</accession>
<gene>
    <name type="primary">fliI</name>
    <name type="ordered locus">BUsg_070</name>
</gene>
<protein>
    <recommendedName>
        <fullName>Flagellum-specific ATP synthase</fullName>
        <ecNumber>7.1.2.2</ecNumber>
    </recommendedName>
</protein>
<dbReference type="EC" id="7.1.2.2"/>
<dbReference type="EMBL" id="AE013218">
    <property type="protein sequence ID" value="AAM67640.1"/>
    <property type="molecule type" value="Genomic_DNA"/>
</dbReference>
<dbReference type="RefSeq" id="WP_108926808.1">
    <property type="nucleotide sequence ID" value="NC_004061.1"/>
</dbReference>
<dbReference type="SMR" id="Q8KA42"/>
<dbReference type="STRING" id="198804.BUsg_070"/>
<dbReference type="GeneID" id="93003540"/>
<dbReference type="KEGG" id="bas:BUsg_070"/>
<dbReference type="eggNOG" id="COG1157">
    <property type="taxonomic scope" value="Bacteria"/>
</dbReference>
<dbReference type="HOGENOM" id="CLU_022398_5_1_6"/>
<dbReference type="Proteomes" id="UP000000416">
    <property type="component" value="Chromosome"/>
</dbReference>
<dbReference type="GO" id="GO:0005737">
    <property type="term" value="C:cytoplasm"/>
    <property type="evidence" value="ECO:0007669"/>
    <property type="project" value="UniProtKB-SubCell"/>
</dbReference>
<dbReference type="GO" id="GO:0030257">
    <property type="term" value="C:type III protein secretion system complex"/>
    <property type="evidence" value="ECO:0007669"/>
    <property type="project" value="InterPro"/>
</dbReference>
<dbReference type="GO" id="GO:0005524">
    <property type="term" value="F:ATP binding"/>
    <property type="evidence" value="ECO:0007669"/>
    <property type="project" value="UniProtKB-KW"/>
</dbReference>
<dbReference type="GO" id="GO:0016887">
    <property type="term" value="F:ATP hydrolysis activity"/>
    <property type="evidence" value="ECO:0007669"/>
    <property type="project" value="InterPro"/>
</dbReference>
<dbReference type="GO" id="GO:0046933">
    <property type="term" value="F:proton-transporting ATP synthase activity, rotational mechanism"/>
    <property type="evidence" value="ECO:0007669"/>
    <property type="project" value="TreeGrafter"/>
</dbReference>
<dbReference type="GO" id="GO:0044781">
    <property type="term" value="P:bacterial-type flagellum organization"/>
    <property type="evidence" value="ECO:0007669"/>
    <property type="project" value="UniProtKB-KW"/>
</dbReference>
<dbReference type="GO" id="GO:0030254">
    <property type="term" value="P:protein secretion by the type III secretion system"/>
    <property type="evidence" value="ECO:0007669"/>
    <property type="project" value="InterPro"/>
</dbReference>
<dbReference type="CDD" id="cd18117">
    <property type="entry name" value="ATP-synt_flagellum-secretory_path_III_N"/>
    <property type="match status" value="1"/>
</dbReference>
<dbReference type="CDD" id="cd01136">
    <property type="entry name" value="ATPase_flagellum-secretory_path_III"/>
    <property type="match status" value="1"/>
</dbReference>
<dbReference type="FunFam" id="3.40.50.12240:FF:000002">
    <property type="entry name" value="Flagellum-specific ATP synthase FliI"/>
    <property type="match status" value="1"/>
</dbReference>
<dbReference type="Gene3D" id="3.40.50.12240">
    <property type="match status" value="1"/>
</dbReference>
<dbReference type="InterPro" id="IPR003593">
    <property type="entry name" value="AAA+_ATPase"/>
</dbReference>
<dbReference type="InterPro" id="IPR020003">
    <property type="entry name" value="ATPase_a/bsu_AS"/>
</dbReference>
<dbReference type="InterPro" id="IPR050053">
    <property type="entry name" value="ATPase_alpha/beta_chains"/>
</dbReference>
<dbReference type="InterPro" id="IPR000194">
    <property type="entry name" value="ATPase_F1/V1/A1_a/bsu_nucl-bd"/>
</dbReference>
<dbReference type="InterPro" id="IPR005714">
    <property type="entry name" value="ATPase_T3SS_FliI/YscN"/>
</dbReference>
<dbReference type="InterPro" id="IPR027417">
    <property type="entry name" value="P-loop_NTPase"/>
</dbReference>
<dbReference type="InterPro" id="IPR040627">
    <property type="entry name" value="T3SS_ATPase_C"/>
</dbReference>
<dbReference type="NCBIfam" id="TIGR01026">
    <property type="entry name" value="fliI_yscN"/>
    <property type="match status" value="1"/>
</dbReference>
<dbReference type="PANTHER" id="PTHR15184">
    <property type="entry name" value="ATP SYNTHASE"/>
    <property type="match status" value="1"/>
</dbReference>
<dbReference type="PANTHER" id="PTHR15184:SF81">
    <property type="entry name" value="FLAGELLUM-SPECIFIC ATP SYNTHASE"/>
    <property type="match status" value="1"/>
</dbReference>
<dbReference type="Pfam" id="PF00006">
    <property type="entry name" value="ATP-synt_ab"/>
    <property type="match status" value="1"/>
</dbReference>
<dbReference type="Pfam" id="PF18269">
    <property type="entry name" value="T3SS_ATPase_C"/>
    <property type="match status" value="1"/>
</dbReference>
<dbReference type="SMART" id="SM00382">
    <property type="entry name" value="AAA"/>
    <property type="match status" value="1"/>
</dbReference>
<dbReference type="SUPFAM" id="SSF52540">
    <property type="entry name" value="P-loop containing nucleoside triphosphate hydrolases"/>
    <property type="match status" value="1"/>
</dbReference>
<dbReference type="PROSITE" id="PS00152">
    <property type="entry name" value="ATPASE_ALPHA_BETA"/>
    <property type="match status" value="1"/>
</dbReference>
<feature type="chain" id="PRO_0000144691" description="Flagellum-specific ATP synthase">
    <location>
        <begin position="1"/>
        <end position="466"/>
    </location>
</feature>
<feature type="binding site" evidence="1">
    <location>
        <begin position="194"/>
        <end position="201"/>
    </location>
    <ligand>
        <name>ATP</name>
        <dbReference type="ChEBI" id="CHEBI:30616"/>
    </ligand>
</feature>
<evidence type="ECO:0000250" key="1"/>
<evidence type="ECO:0000255" key="2">
    <source>
        <dbReference type="PROSITE-ProRule" id="PRU10106"/>
    </source>
</evidence>
<evidence type="ECO:0000305" key="3"/>
<proteinExistence type="inferred from homology"/>
<organism>
    <name type="scientific">Buchnera aphidicola subsp. Schizaphis graminum (strain Sg)</name>
    <dbReference type="NCBI Taxonomy" id="198804"/>
    <lineage>
        <taxon>Bacteria</taxon>
        <taxon>Pseudomonadati</taxon>
        <taxon>Pseudomonadota</taxon>
        <taxon>Gammaproteobacteria</taxon>
        <taxon>Enterobacterales</taxon>
        <taxon>Erwiniaceae</taxon>
        <taxon>Buchnera</taxon>
    </lineage>
</organism>
<reference key="1">
    <citation type="journal article" date="2002" name="Science">
        <title>50 million years of genomic stasis in endosymbiotic bacteria.</title>
        <authorList>
            <person name="Tamas I."/>
            <person name="Klasson L."/>
            <person name="Canbaeck B."/>
            <person name="Naeslund A.K."/>
            <person name="Eriksson A.-S."/>
            <person name="Wernegreen J.J."/>
            <person name="Sandstroem J.P."/>
            <person name="Moran N.A."/>
            <person name="Andersson S.G.E."/>
        </authorList>
    </citation>
    <scope>NUCLEOTIDE SEQUENCE [LARGE SCALE GENOMIC DNA]</scope>
    <source>
        <strain>Sg</strain>
    </source>
</reference>